<feature type="chain" id="PRO_0000086766" description="Testis-specific serine/threonine-protein kinase 1">
    <location>
        <begin position="1"/>
        <end position="367"/>
    </location>
</feature>
<feature type="domain" description="Protein kinase" evidence="3">
    <location>
        <begin position="12"/>
        <end position="272"/>
    </location>
</feature>
<feature type="region of interest" description="Disordered" evidence="5">
    <location>
        <begin position="276"/>
        <end position="367"/>
    </location>
</feature>
<feature type="compositionally biased region" description="Basic and acidic residues" evidence="5">
    <location>
        <begin position="303"/>
        <end position="314"/>
    </location>
</feature>
<feature type="active site" description="Proton acceptor" evidence="3 4">
    <location>
        <position position="136"/>
    </location>
</feature>
<feature type="binding site" evidence="3">
    <location>
        <begin position="18"/>
        <end position="26"/>
    </location>
    <ligand>
        <name>ATP</name>
        <dbReference type="ChEBI" id="CHEBI:30616"/>
    </ligand>
</feature>
<feature type="binding site" evidence="3">
    <location>
        <position position="41"/>
    </location>
    <ligand>
        <name>ATP</name>
        <dbReference type="ChEBI" id="CHEBI:30616"/>
    </ligand>
</feature>
<feature type="modified residue" description="Phosphothreonine" evidence="7">
    <location>
        <position position="174"/>
    </location>
</feature>
<feature type="sequence variant" id="VAR_041235" description="In dbSNP:rs747955728." evidence="8">
    <original>A</original>
    <variation>T</variation>
    <location>
        <position position="50"/>
    </location>
</feature>
<feature type="sequence variant" id="VAR_041236" description="In dbSNP:rs55930004." evidence="8">
    <original>H</original>
    <variation>Y</variation>
    <location>
        <position position="83"/>
    </location>
</feature>
<feature type="sequence variant" id="VAR_041237" description="In dbSNP:rs55940513." evidence="8">
    <original>V</original>
    <variation>L</variation>
    <location>
        <position position="233"/>
    </location>
</feature>
<feature type="sequence variant" id="VAR_041238" description="In dbSNP:rs55738530." evidence="8">
    <original>R</original>
    <variation>C</variation>
    <location>
        <position position="237"/>
    </location>
</feature>
<feature type="sequence variant" id="VAR_041239" description="In dbSNP:rs34696815." evidence="8">
    <original>G</original>
    <variation>W</variation>
    <location>
        <position position="288"/>
    </location>
</feature>
<feature type="sequence variant" id="VAR_041240" description="In dbSNP:rs11953478." evidence="8">
    <original>G</original>
    <variation>E</variation>
    <location>
        <position position="293"/>
    </location>
</feature>
<feature type="mutagenesis site" description="Loss of kinase activity." evidence="7">
    <original>T</original>
    <variation>A</variation>
    <location>
        <position position="174"/>
    </location>
</feature>
<feature type="mutagenesis site" description="Constitutively active." evidence="7">
    <original>T</original>
    <variation>E</variation>
    <location>
        <position position="174"/>
    </location>
</feature>
<feature type="sequence conflict" description="In Ref. 4; BAG36136." evidence="11" ref="4">
    <original>P</original>
    <variation>L</variation>
    <location>
        <position position="345"/>
    </location>
</feature>
<gene>
    <name type="primary">TSSK1B</name>
    <name type="synonym">SPOGA1</name>
    <name type="synonym">SPOGA4</name>
    <name type="synonym">STK22A</name>
    <name type="synonym">STK22D</name>
    <name type="synonym">TSSK1</name>
    <name type="ORF">FKSG81</name>
</gene>
<sequence length="367" mass="41618">MDDAAVLKRRGYLLGINLGEGSYAKVKSAYSERLKFNVAIKIIDRKKAPADFLEKFLPREIEILAMLNHCSIIKTYEIFETSHGKVYIVMELAVQGDLLELIKTRGALHEDEARKKFHQLSLAIKYCHDLDVVHRDLKCDNLLLDKDFNIKLSDFSFSKRCLRDDSGRMALSKTFCGSPAYAAPEVLQGIPYQPKVYDIWSLGVILYIMVCGSMPYDDSNIKKMLRIQKEHRVNFPRSKHLTGECKDLIYHMLQPDVNRRLHIDEILSHCWMQPKARGSPSVAINKEGESSRGTEPLWTPEPGSDKKSATKLEPEGEAQPQAQPETKPEGTAMQMSRQSEILGFPSKPSTMETEEGPPQQPPETRAQ</sequence>
<evidence type="ECO:0000250" key="1"/>
<evidence type="ECO:0000250" key="2">
    <source>
        <dbReference type="UniProtKB" id="Q61241"/>
    </source>
</evidence>
<evidence type="ECO:0000255" key="3">
    <source>
        <dbReference type="PROSITE-ProRule" id="PRU00159"/>
    </source>
</evidence>
<evidence type="ECO:0000255" key="4">
    <source>
        <dbReference type="PROSITE-ProRule" id="PRU10027"/>
    </source>
</evidence>
<evidence type="ECO:0000256" key="5">
    <source>
        <dbReference type="SAM" id="MobiDB-lite"/>
    </source>
</evidence>
<evidence type="ECO:0000269" key="6">
    <source>
    </source>
</evidence>
<evidence type="ECO:0000269" key="7">
    <source>
    </source>
</evidence>
<evidence type="ECO:0000269" key="8">
    <source>
    </source>
</evidence>
<evidence type="ECO:0000269" key="9">
    <source>
    </source>
</evidence>
<evidence type="ECO:0000269" key="10">
    <source>
    </source>
</evidence>
<evidence type="ECO:0000305" key="11"/>
<evidence type="ECO:0000305" key="12">
    <source>
    </source>
</evidence>
<keyword id="KW-0067">ATP-binding</keyword>
<keyword id="KW-0966">Cell projection</keyword>
<keyword id="KW-0969">Cilium</keyword>
<keyword id="KW-0963">Cytoplasm</keyword>
<keyword id="KW-0968">Cytoplasmic vesicle</keyword>
<keyword id="KW-0217">Developmental protein</keyword>
<keyword id="KW-0221">Differentiation</keyword>
<keyword id="KW-0282">Flagellum</keyword>
<keyword id="KW-0418">Kinase</keyword>
<keyword id="KW-0460">Magnesium</keyword>
<keyword id="KW-0479">Metal-binding</keyword>
<keyword id="KW-0547">Nucleotide-binding</keyword>
<keyword id="KW-0597">Phosphoprotein</keyword>
<keyword id="KW-1267">Proteomics identification</keyword>
<keyword id="KW-1185">Reference proteome</keyword>
<keyword id="KW-0723">Serine/threonine-protein kinase</keyword>
<keyword id="KW-0744">Spermatogenesis</keyword>
<keyword id="KW-0808">Transferase</keyword>
<keyword id="KW-0832">Ubl conjugation</keyword>
<comment type="function">
    <text evidence="7 9">Testis-specific serine/threonine-protein kinase required during spermatid development. Phosphorylates 'Ser-288' of TSKS. Involved in the late stages of spermatogenesis, during the reconstruction of the cytoplasm. During spermatogenesis, required for the transformation of a ring-shaped structure around the base of the flagellum originating from the chromatoid body.</text>
</comment>
<comment type="catalytic activity">
    <reaction evidence="9">
        <text>L-seryl-[protein] + ATP = O-phospho-L-seryl-[protein] + ADP + H(+)</text>
        <dbReference type="Rhea" id="RHEA:17989"/>
        <dbReference type="Rhea" id="RHEA-COMP:9863"/>
        <dbReference type="Rhea" id="RHEA-COMP:11604"/>
        <dbReference type="ChEBI" id="CHEBI:15378"/>
        <dbReference type="ChEBI" id="CHEBI:29999"/>
        <dbReference type="ChEBI" id="CHEBI:30616"/>
        <dbReference type="ChEBI" id="CHEBI:83421"/>
        <dbReference type="ChEBI" id="CHEBI:456216"/>
        <dbReference type="EC" id="2.7.11.1"/>
    </reaction>
</comment>
<comment type="catalytic activity">
    <reaction evidence="9">
        <text>L-threonyl-[protein] + ATP = O-phospho-L-threonyl-[protein] + ADP + H(+)</text>
        <dbReference type="Rhea" id="RHEA:46608"/>
        <dbReference type="Rhea" id="RHEA-COMP:11060"/>
        <dbReference type="Rhea" id="RHEA-COMP:11605"/>
        <dbReference type="ChEBI" id="CHEBI:15378"/>
        <dbReference type="ChEBI" id="CHEBI:30013"/>
        <dbReference type="ChEBI" id="CHEBI:30616"/>
        <dbReference type="ChEBI" id="CHEBI:61977"/>
        <dbReference type="ChEBI" id="CHEBI:456216"/>
        <dbReference type="EC" id="2.7.11.1"/>
    </reaction>
</comment>
<comment type="cofactor">
    <cofactor evidence="2">
        <name>Mg(2+)</name>
        <dbReference type="ChEBI" id="CHEBI:18420"/>
    </cofactor>
</comment>
<comment type="activity regulation">
    <text evidence="7 9">Kinase activity is specifically inhibited by 2 classes of compounds: biphenyl compounds (1,1'-(biphenyl-4,4'-diyl)bis(2,2-dihydroxyethanone)) and 1,2,7-trialky-1H-imidazo[4,5-g]quinoxalin-6-one. Activated by phosphorylation on Thr-174 and potentially by autophosphorylation.</text>
</comment>
<comment type="subunit">
    <text evidence="2 6">Interacts with TSSK2. Interacts with HSP90; this interaction stabilizes TSSK1 (By similarity).</text>
</comment>
<comment type="interaction">
    <interactant intactId="EBI-6423734">
        <id>Q9BXA7</id>
    </interactant>
    <interactant intactId="EBI-718488">
        <id>O43281</id>
        <label>EFS</label>
    </interactant>
    <organismsDiffer>false</organismsDiffer>
    <experiments>3</experiments>
</comment>
<comment type="interaction">
    <interactant intactId="EBI-6423734">
        <id>Q9BXA7</id>
    </interactant>
    <interactant intactId="EBI-11525448">
        <id>O43281-2</id>
        <label>EFS</label>
    </interactant>
    <organismsDiffer>false</organismsDiffer>
    <experiments>3</experiments>
</comment>
<comment type="interaction">
    <interactant intactId="EBI-6423734">
        <id>Q9BXA7</id>
    </interactant>
    <interactant intactId="EBI-18340430">
        <id>Q4G0N7</id>
        <label>FAM229B</label>
    </interactant>
    <organismsDiffer>false</organismsDiffer>
    <experiments>4</experiments>
</comment>
<comment type="interaction">
    <interactant intactId="EBI-6423734">
        <id>Q9BXA7</id>
    </interactant>
    <interactant intactId="EBI-11319000">
        <id>O15353</id>
        <label>FOXN1</label>
    </interactant>
    <organismsDiffer>false</organismsDiffer>
    <experiments>4</experiments>
</comment>
<comment type="interaction">
    <interactant intactId="EBI-6423734">
        <id>Q9BXA7</id>
    </interactant>
    <interactant intactId="EBI-352572">
        <id>P08238</id>
        <label>HSP90AB1</label>
    </interactant>
    <organismsDiffer>false</organismsDiffer>
    <experiments>2</experiments>
</comment>
<comment type="interaction">
    <interactant intactId="EBI-6423734">
        <id>Q9BXA7</id>
    </interactant>
    <interactant intactId="EBI-16439278">
        <id>Q6FHY5</id>
        <label>MEOX2</label>
    </interactant>
    <organismsDiffer>false</organismsDiffer>
    <experiments>3</experiments>
</comment>
<comment type="interaction">
    <interactant intactId="EBI-6423734">
        <id>Q9BXA7</id>
    </interactant>
    <interactant intactId="EBI-852101">
        <id>Q9UJT2</id>
        <label>TSKS</label>
    </interactant>
    <organismsDiffer>false</organismsDiffer>
    <experiments>3</experiments>
</comment>
<comment type="interaction">
    <interactant intactId="EBI-6423734">
        <id>Q9BXA7</id>
    </interactant>
    <interactant intactId="EBI-356498">
        <id>P62258</id>
        <label>YWHAE</label>
    </interactant>
    <organismsDiffer>false</organismsDiffer>
    <experiments>2</experiments>
</comment>
<comment type="subcellular location">
    <subcellularLocation>
        <location evidence="1">Cytoplasm</location>
    </subcellularLocation>
    <subcellularLocation>
        <location evidence="1">Cytoplasmic vesicle</location>
        <location evidence="1">Secretory vesicle</location>
        <location evidence="1">Acrosome</location>
    </subcellularLocation>
    <subcellularLocation>
        <location evidence="1">Cell projection</location>
        <location evidence="1">Cilium</location>
        <location evidence="1">Flagellum</location>
    </subcellularLocation>
    <text evidence="1">In spermatozoa, present in the sperm head and in the flagellum.</text>
</comment>
<comment type="tissue specificity">
    <text evidence="6 10">Testis-specific. Present in sperm (at protein level).</text>
</comment>
<comment type="PTM">
    <text evidence="7">Autophosphorylated.</text>
</comment>
<comment type="PTM">
    <text evidence="2">Ubiquitinated; HSP90 activity negatively regulates ubiquitination and degradation.</text>
</comment>
<comment type="miscellaneous">
    <text evidence="12">TSSK1B might be used as a target for male contraception or and intra-vaginal spermicides.</text>
</comment>
<comment type="similarity">
    <text evidence="11">Belongs to the protein kinase superfamily. CAMK Ser/Thr protein kinase family.</text>
</comment>
<dbReference type="EC" id="2.7.11.1" evidence="9"/>
<dbReference type="EMBL" id="AY028964">
    <property type="protein sequence ID" value="AAK27734.1"/>
    <property type="molecule type" value="mRNA"/>
</dbReference>
<dbReference type="EMBL" id="AF348076">
    <property type="protein sequence ID" value="AAK29413.1"/>
    <property type="molecule type" value="mRNA"/>
</dbReference>
<dbReference type="EMBL" id="AK313332">
    <property type="protein sequence ID" value="BAG36136.1"/>
    <property type="molecule type" value="mRNA"/>
</dbReference>
<dbReference type="EMBL" id="AC010431">
    <property type="status" value="NOT_ANNOTATED_CDS"/>
    <property type="molecule type" value="Genomic_DNA"/>
</dbReference>
<dbReference type="EMBL" id="BC022515">
    <property type="protein sequence ID" value="AAH22515.1"/>
    <property type="molecule type" value="mRNA"/>
</dbReference>
<dbReference type="CCDS" id="CCDS4112.1"/>
<dbReference type="RefSeq" id="NP_114417.1">
    <property type="nucleotide sequence ID" value="NM_032028.4"/>
</dbReference>
<dbReference type="SMR" id="Q9BXA7"/>
<dbReference type="BioGRID" id="123825">
    <property type="interactions" value="68"/>
</dbReference>
<dbReference type="FunCoup" id="Q9BXA7">
    <property type="interactions" value="59"/>
</dbReference>
<dbReference type="IntAct" id="Q9BXA7">
    <property type="interactions" value="38"/>
</dbReference>
<dbReference type="STRING" id="9606.ENSP00000375081"/>
<dbReference type="BindingDB" id="Q9BXA7"/>
<dbReference type="ChEMBL" id="CHEMBL6003"/>
<dbReference type="DrugBank" id="DB12010">
    <property type="generic name" value="Fostamatinib"/>
</dbReference>
<dbReference type="DrugCentral" id="Q9BXA7"/>
<dbReference type="GuidetoPHARMACOLOGY" id="2257"/>
<dbReference type="GlyGen" id="Q9BXA7">
    <property type="glycosylation" value="1 site, 1 O-linked glycan (1 site)"/>
</dbReference>
<dbReference type="iPTMnet" id="Q9BXA7"/>
<dbReference type="PhosphoSitePlus" id="Q9BXA7"/>
<dbReference type="BioMuta" id="TSSK1B"/>
<dbReference type="DMDM" id="30316282"/>
<dbReference type="jPOST" id="Q9BXA7"/>
<dbReference type="MassIVE" id="Q9BXA7"/>
<dbReference type="PaxDb" id="9606-ENSP00000375081"/>
<dbReference type="PeptideAtlas" id="Q9BXA7"/>
<dbReference type="ProteomicsDB" id="79392"/>
<dbReference type="Antibodypedia" id="25396">
    <property type="antibodies" value="50 antibodies from 18 providers"/>
</dbReference>
<dbReference type="DNASU" id="83942"/>
<dbReference type="Ensembl" id="ENST00000390666.4">
    <property type="protein sequence ID" value="ENSP00000375081.3"/>
    <property type="gene ID" value="ENSG00000212122.4"/>
</dbReference>
<dbReference type="GeneID" id="83942"/>
<dbReference type="KEGG" id="hsa:83942"/>
<dbReference type="MANE-Select" id="ENST00000390666.4">
    <property type="protein sequence ID" value="ENSP00000375081.3"/>
    <property type="RefSeq nucleotide sequence ID" value="NM_032028.4"/>
    <property type="RefSeq protein sequence ID" value="NP_114417.1"/>
</dbReference>
<dbReference type="UCSC" id="uc003kqm.2">
    <property type="organism name" value="human"/>
</dbReference>
<dbReference type="AGR" id="HGNC:14968"/>
<dbReference type="CTD" id="83942"/>
<dbReference type="DisGeNET" id="83942"/>
<dbReference type="GeneCards" id="TSSK1B"/>
<dbReference type="HGNC" id="HGNC:14968">
    <property type="gene designation" value="TSSK1B"/>
</dbReference>
<dbReference type="HPA" id="ENSG00000212122">
    <property type="expression patterns" value="Tissue enriched (testis)"/>
</dbReference>
<dbReference type="MIM" id="610709">
    <property type="type" value="gene"/>
</dbReference>
<dbReference type="neXtProt" id="NX_Q9BXA7"/>
<dbReference type="OpenTargets" id="ENSG00000212122"/>
<dbReference type="PharmGKB" id="PA37944"/>
<dbReference type="VEuPathDB" id="HostDB:ENSG00000212122"/>
<dbReference type="eggNOG" id="KOG0583">
    <property type="taxonomic scope" value="Eukaryota"/>
</dbReference>
<dbReference type="GeneTree" id="ENSGT00940000163130"/>
<dbReference type="HOGENOM" id="CLU_000288_63_0_1"/>
<dbReference type="InParanoid" id="Q9BXA7"/>
<dbReference type="OMA" id="MQPKAWG"/>
<dbReference type="OrthoDB" id="541276at2759"/>
<dbReference type="PAN-GO" id="Q9BXA7">
    <property type="GO annotations" value="3 GO annotations based on evolutionary models"/>
</dbReference>
<dbReference type="PhylomeDB" id="Q9BXA7"/>
<dbReference type="TreeFam" id="TF352374"/>
<dbReference type="PathwayCommons" id="Q9BXA7"/>
<dbReference type="SignaLink" id="Q9BXA7"/>
<dbReference type="SIGNOR" id="Q9BXA7"/>
<dbReference type="BioGRID-ORCS" id="83942">
    <property type="hits" value="7 hits in 1171 CRISPR screens"/>
</dbReference>
<dbReference type="GenomeRNAi" id="83942"/>
<dbReference type="Pharos" id="Q9BXA7">
    <property type="development level" value="Tchem"/>
</dbReference>
<dbReference type="PRO" id="PR:Q9BXA7"/>
<dbReference type="Proteomes" id="UP000005640">
    <property type="component" value="Chromosome 5"/>
</dbReference>
<dbReference type="RNAct" id="Q9BXA7">
    <property type="molecule type" value="protein"/>
</dbReference>
<dbReference type="Bgee" id="ENSG00000212122">
    <property type="expression patterns" value="Expressed in right testis and 28 other cell types or tissues"/>
</dbReference>
<dbReference type="ExpressionAtlas" id="Q9BXA7">
    <property type="expression patterns" value="baseline and differential"/>
</dbReference>
<dbReference type="GO" id="GO:0001669">
    <property type="term" value="C:acrosomal vesicle"/>
    <property type="evidence" value="ECO:0007669"/>
    <property type="project" value="UniProtKB-SubCell"/>
</dbReference>
<dbReference type="GO" id="GO:0031514">
    <property type="term" value="C:motile cilium"/>
    <property type="evidence" value="ECO:0000250"/>
    <property type="project" value="UniProtKB"/>
</dbReference>
<dbReference type="GO" id="GO:0005524">
    <property type="term" value="F:ATP binding"/>
    <property type="evidence" value="ECO:0000314"/>
    <property type="project" value="UniProtKB"/>
</dbReference>
<dbReference type="GO" id="GO:0000287">
    <property type="term" value="F:magnesium ion binding"/>
    <property type="evidence" value="ECO:0000314"/>
    <property type="project" value="UniProtKB"/>
</dbReference>
<dbReference type="GO" id="GO:0106310">
    <property type="term" value="F:protein serine kinase activity"/>
    <property type="evidence" value="ECO:0007669"/>
    <property type="project" value="RHEA"/>
</dbReference>
<dbReference type="GO" id="GO:0004674">
    <property type="term" value="F:protein serine/threonine kinase activity"/>
    <property type="evidence" value="ECO:0000314"/>
    <property type="project" value="UniProtKB"/>
</dbReference>
<dbReference type="GO" id="GO:0044877">
    <property type="term" value="F:protein-containing complex binding"/>
    <property type="evidence" value="ECO:0007669"/>
    <property type="project" value="Ensembl"/>
</dbReference>
<dbReference type="GO" id="GO:0006468">
    <property type="term" value="P:protein phosphorylation"/>
    <property type="evidence" value="ECO:0000314"/>
    <property type="project" value="UniProtKB"/>
</dbReference>
<dbReference type="GO" id="GO:0007286">
    <property type="term" value="P:spermatid development"/>
    <property type="evidence" value="ECO:0000250"/>
    <property type="project" value="UniProtKB"/>
</dbReference>
<dbReference type="CDD" id="cd14165">
    <property type="entry name" value="STKc_TSSK1_2-like"/>
    <property type="match status" value="1"/>
</dbReference>
<dbReference type="FunFam" id="1.10.510.10:FF:000443">
    <property type="entry name" value="Testis-specific serine/threonine-protein kinase 2"/>
    <property type="match status" value="1"/>
</dbReference>
<dbReference type="Gene3D" id="1.10.510.10">
    <property type="entry name" value="Transferase(Phosphotransferase) domain 1"/>
    <property type="match status" value="1"/>
</dbReference>
<dbReference type="InterPro" id="IPR011009">
    <property type="entry name" value="Kinase-like_dom_sf"/>
</dbReference>
<dbReference type="InterPro" id="IPR000719">
    <property type="entry name" value="Prot_kinase_dom"/>
</dbReference>
<dbReference type="InterPro" id="IPR017441">
    <property type="entry name" value="Protein_kinase_ATP_BS"/>
</dbReference>
<dbReference type="InterPro" id="IPR008271">
    <property type="entry name" value="Ser/Thr_kinase_AS"/>
</dbReference>
<dbReference type="PANTHER" id="PTHR24346">
    <property type="entry name" value="MAP/MICROTUBULE AFFINITY-REGULATING KINASE"/>
    <property type="match status" value="1"/>
</dbReference>
<dbReference type="PANTHER" id="PTHR24346:SF102">
    <property type="entry name" value="TESTIS-SPECIFIC SERINE_THREONINE-PROTEIN KINASE 1"/>
    <property type="match status" value="1"/>
</dbReference>
<dbReference type="Pfam" id="PF00069">
    <property type="entry name" value="Pkinase"/>
    <property type="match status" value="1"/>
</dbReference>
<dbReference type="SMART" id="SM00220">
    <property type="entry name" value="S_TKc"/>
    <property type="match status" value="1"/>
</dbReference>
<dbReference type="SUPFAM" id="SSF56112">
    <property type="entry name" value="Protein kinase-like (PK-like)"/>
    <property type="match status" value="1"/>
</dbReference>
<dbReference type="PROSITE" id="PS00107">
    <property type="entry name" value="PROTEIN_KINASE_ATP"/>
    <property type="match status" value="1"/>
</dbReference>
<dbReference type="PROSITE" id="PS50011">
    <property type="entry name" value="PROTEIN_KINASE_DOM"/>
    <property type="match status" value="1"/>
</dbReference>
<dbReference type="PROSITE" id="PS00108">
    <property type="entry name" value="PROTEIN_KINASE_ST"/>
    <property type="match status" value="1"/>
</dbReference>
<reference key="1">
    <citation type="journal article" date="2004" name="Mol. Hum. Reprod.">
        <title>Expression analysis of the human testis-specific serine/threonine kinase (TSSK) homologues. A TSSK member is present in the equatorial segment of human sperm.</title>
        <authorList>
            <person name="Hao Z."/>
            <person name="Jha K.N."/>
            <person name="Kim Y.H."/>
            <person name="Vemuganti S."/>
            <person name="Westbrook V.A."/>
            <person name="Chertihin O."/>
            <person name="Markgraf K."/>
            <person name="Flickinger C.J."/>
            <person name="Coppola M."/>
            <person name="Herr J.C."/>
            <person name="Visconti P.E."/>
        </authorList>
    </citation>
    <scope>NUCLEOTIDE SEQUENCE [MRNA]</scope>
    <scope>TISSUE SPECIFICITY</scope>
    <scope>INTERACTION WITH TSSK2</scope>
</reference>
<reference key="2">
    <citation type="journal article" date="2005" name="FEBS Lett.">
        <title>Identification of the sucrose non-fermenting related kinase SNRK, as a novel LKB1 substrate.</title>
        <authorList>
            <person name="Jaleel M."/>
            <person name="McBride A."/>
            <person name="Lizcano J.M."/>
            <person name="Deak M."/>
            <person name="Toth R."/>
            <person name="Morrice N.A."/>
            <person name="Alessi D.R."/>
        </authorList>
    </citation>
    <scope>NUCLEOTIDE SEQUENCE [MRNA]</scope>
    <scope>FUNCTION</scope>
    <scope>ACTIVITY REGULATION</scope>
    <scope>AUTOPHOSPHORYLATION</scope>
    <scope>PHOSPHORYLATION AT THR-174</scope>
    <scope>MUTAGENESIS OF THR-174</scope>
</reference>
<reference key="3">
    <citation type="submission" date="2001-02" db="EMBL/GenBank/DDBJ databases">
        <title>Molecular cloning and characterization of FKSG81, a novel gene located on human chromosome 5.</title>
        <authorList>
            <person name="Wang Y.-G."/>
            <person name="Gong L."/>
        </authorList>
    </citation>
    <scope>NUCLEOTIDE SEQUENCE [MRNA]</scope>
</reference>
<reference key="4">
    <citation type="journal article" date="2004" name="Nat. Genet.">
        <title>Complete sequencing and characterization of 21,243 full-length human cDNAs.</title>
        <authorList>
            <person name="Ota T."/>
            <person name="Suzuki Y."/>
            <person name="Nishikawa T."/>
            <person name="Otsuki T."/>
            <person name="Sugiyama T."/>
            <person name="Irie R."/>
            <person name="Wakamatsu A."/>
            <person name="Hayashi K."/>
            <person name="Sato H."/>
            <person name="Nagai K."/>
            <person name="Kimura K."/>
            <person name="Makita H."/>
            <person name="Sekine M."/>
            <person name="Obayashi M."/>
            <person name="Nishi T."/>
            <person name="Shibahara T."/>
            <person name="Tanaka T."/>
            <person name="Ishii S."/>
            <person name="Yamamoto J."/>
            <person name="Saito K."/>
            <person name="Kawai Y."/>
            <person name="Isono Y."/>
            <person name="Nakamura Y."/>
            <person name="Nagahari K."/>
            <person name="Murakami K."/>
            <person name="Yasuda T."/>
            <person name="Iwayanagi T."/>
            <person name="Wagatsuma M."/>
            <person name="Shiratori A."/>
            <person name="Sudo H."/>
            <person name="Hosoiri T."/>
            <person name="Kaku Y."/>
            <person name="Kodaira H."/>
            <person name="Kondo H."/>
            <person name="Sugawara M."/>
            <person name="Takahashi M."/>
            <person name="Kanda K."/>
            <person name="Yokoi T."/>
            <person name="Furuya T."/>
            <person name="Kikkawa E."/>
            <person name="Omura Y."/>
            <person name="Abe K."/>
            <person name="Kamihara K."/>
            <person name="Katsuta N."/>
            <person name="Sato K."/>
            <person name="Tanikawa M."/>
            <person name="Yamazaki M."/>
            <person name="Ninomiya K."/>
            <person name="Ishibashi T."/>
            <person name="Yamashita H."/>
            <person name="Murakawa K."/>
            <person name="Fujimori K."/>
            <person name="Tanai H."/>
            <person name="Kimata M."/>
            <person name="Watanabe M."/>
            <person name="Hiraoka S."/>
            <person name="Chiba Y."/>
            <person name="Ishida S."/>
            <person name="Ono Y."/>
            <person name="Takiguchi S."/>
            <person name="Watanabe S."/>
            <person name="Yosida M."/>
            <person name="Hotuta T."/>
            <person name="Kusano J."/>
            <person name="Kanehori K."/>
            <person name="Takahashi-Fujii A."/>
            <person name="Hara H."/>
            <person name="Tanase T.-O."/>
            <person name="Nomura Y."/>
            <person name="Togiya S."/>
            <person name="Komai F."/>
            <person name="Hara R."/>
            <person name="Takeuchi K."/>
            <person name="Arita M."/>
            <person name="Imose N."/>
            <person name="Musashino K."/>
            <person name="Yuuki H."/>
            <person name="Oshima A."/>
            <person name="Sasaki N."/>
            <person name="Aotsuka S."/>
            <person name="Yoshikawa Y."/>
            <person name="Matsunawa H."/>
            <person name="Ichihara T."/>
            <person name="Shiohata N."/>
            <person name="Sano S."/>
            <person name="Moriya S."/>
            <person name="Momiyama H."/>
            <person name="Satoh N."/>
            <person name="Takami S."/>
            <person name="Terashima Y."/>
            <person name="Suzuki O."/>
            <person name="Nakagawa S."/>
            <person name="Senoh A."/>
            <person name="Mizoguchi H."/>
            <person name="Goto Y."/>
            <person name="Shimizu F."/>
            <person name="Wakebe H."/>
            <person name="Hishigaki H."/>
            <person name="Watanabe T."/>
            <person name="Sugiyama A."/>
            <person name="Takemoto M."/>
            <person name="Kawakami B."/>
            <person name="Yamazaki M."/>
            <person name="Watanabe K."/>
            <person name="Kumagai A."/>
            <person name="Itakura S."/>
            <person name="Fukuzumi Y."/>
            <person name="Fujimori Y."/>
            <person name="Komiyama M."/>
            <person name="Tashiro H."/>
            <person name="Tanigami A."/>
            <person name="Fujiwara T."/>
            <person name="Ono T."/>
            <person name="Yamada K."/>
            <person name="Fujii Y."/>
            <person name="Ozaki K."/>
            <person name="Hirao M."/>
            <person name="Ohmori Y."/>
            <person name="Kawabata A."/>
            <person name="Hikiji T."/>
            <person name="Kobatake N."/>
            <person name="Inagaki H."/>
            <person name="Ikema Y."/>
            <person name="Okamoto S."/>
            <person name="Okitani R."/>
            <person name="Kawakami T."/>
            <person name="Noguchi S."/>
            <person name="Itoh T."/>
            <person name="Shigeta K."/>
            <person name="Senba T."/>
            <person name="Matsumura K."/>
            <person name="Nakajima Y."/>
            <person name="Mizuno T."/>
            <person name="Morinaga M."/>
            <person name="Sasaki M."/>
            <person name="Togashi T."/>
            <person name="Oyama M."/>
            <person name="Hata H."/>
            <person name="Watanabe M."/>
            <person name="Komatsu T."/>
            <person name="Mizushima-Sugano J."/>
            <person name="Satoh T."/>
            <person name="Shirai Y."/>
            <person name="Takahashi Y."/>
            <person name="Nakagawa K."/>
            <person name="Okumura K."/>
            <person name="Nagase T."/>
            <person name="Nomura N."/>
            <person name="Kikuchi H."/>
            <person name="Masuho Y."/>
            <person name="Yamashita R."/>
            <person name="Nakai K."/>
            <person name="Yada T."/>
            <person name="Nakamura Y."/>
            <person name="Ohara O."/>
            <person name="Isogai T."/>
            <person name="Sugano S."/>
        </authorList>
    </citation>
    <scope>NUCLEOTIDE SEQUENCE [LARGE SCALE MRNA]</scope>
    <source>
        <tissue>Testis</tissue>
    </source>
</reference>
<reference key="5">
    <citation type="journal article" date="2004" name="Nature">
        <title>The DNA sequence and comparative analysis of human chromosome 5.</title>
        <authorList>
            <person name="Schmutz J."/>
            <person name="Martin J."/>
            <person name="Terry A."/>
            <person name="Couronne O."/>
            <person name="Grimwood J."/>
            <person name="Lowry S."/>
            <person name="Gordon L.A."/>
            <person name="Scott D."/>
            <person name="Xie G."/>
            <person name="Huang W."/>
            <person name="Hellsten U."/>
            <person name="Tran-Gyamfi M."/>
            <person name="She X."/>
            <person name="Prabhakar S."/>
            <person name="Aerts A."/>
            <person name="Altherr M."/>
            <person name="Bajorek E."/>
            <person name="Black S."/>
            <person name="Branscomb E."/>
            <person name="Caoile C."/>
            <person name="Challacombe J.F."/>
            <person name="Chan Y.M."/>
            <person name="Denys M."/>
            <person name="Detter J.C."/>
            <person name="Escobar J."/>
            <person name="Flowers D."/>
            <person name="Fotopulos D."/>
            <person name="Glavina T."/>
            <person name="Gomez M."/>
            <person name="Gonzales E."/>
            <person name="Goodstein D."/>
            <person name="Grigoriev I."/>
            <person name="Groza M."/>
            <person name="Hammon N."/>
            <person name="Hawkins T."/>
            <person name="Haydu L."/>
            <person name="Israni S."/>
            <person name="Jett J."/>
            <person name="Kadner K."/>
            <person name="Kimball H."/>
            <person name="Kobayashi A."/>
            <person name="Lopez F."/>
            <person name="Lou Y."/>
            <person name="Martinez D."/>
            <person name="Medina C."/>
            <person name="Morgan J."/>
            <person name="Nandkeshwar R."/>
            <person name="Noonan J.P."/>
            <person name="Pitluck S."/>
            <person name="Pollard M."/>
            <person name="Predki P."/>
            <person name="Priest J."/>
            <person name="Ramirez L."/>
            <person name="Retterer J."/>
            <person name="Rodriguez A."/>
            <person name="Rogers S."/>
            <person name="Salamov A."/>
            <person name="Salazar A."/>
            <person name="Thayer N."/>
            <person name="Tice H."/>
            <person name="Tsai M."/>
            <person name="Ustaszewska A."/>
            <person name="Vo N."/>
            <person name="Wheeler J."/>
            <person name="Wu K."/>
            <person name="Yang J."/>
            <person name="Dickson M."/>
            <person name="Cheng J.-F."/>
            <person name="Eichler E.E."/>
            <person name="Olsen A."/>
            <person name="Pennacchio L.A."/>
            <person name="Rokhsar D.S."/>
            <person name="Richardson P."/>
            <person name="Lucas S.M."/>
            <person name="Myers R.M."/>
            <person name="Rubin E.M."/>
        </authorList>
    </citation>
    <scope>NUCLEOTIDE SEQUENCE [LARGE SCALE GENOMIC DNA]</scope>
</reference>
<reference key="6">
    <citation type="journal article" date="2004" name="Genome Res.">
        <title>The status, quality, and expansion of the NIH full-length cDNA project: the Mammalian Gene Collection (MGC).</title>
        <authorList>
            <consortium name="The MGC Project Team"/>
        </authorList>
    </citation>
    <scope>NUCLEOTIDE SEQUENCE [LARGE SCALE MRNA]</scope>
    <source>
        <tissue>Hippocampus</tissue>
    </source>
</reference>
<reference key="7">
    <citation type="journal article" date="2007" name="Soc. Reprod. Fertil. Suppl.">
        <title>Validation of a testis specific serine/threonine kinase [TSSK] family and the substrate of TSSK1 &amp; 2, TSKS, as contraceptive targets.</title>
        <authorList>
            <person name="Xu B."/>
            <person name="Hao Z."/>
            <person name="Jha K.N."/>
            <person name="Digilio L."/>
            <person name="Urekar C."/>
            <person name="Kim Y.H."/>
            <person name="Pulido S."/>
            <person name="Flickinger C.J."/>
            <person name="Herr J.C."/>
        </authorList>
    </citation>
    <scope>PUTATIVE CONTRACEPTIVE TARGET</scope>
</reference>
<reference key="8">
    <citation type="journal article" date="2009" name="J. Med. Chem.">
        <title>Identification of peptide substrate and small molecule inhibitors of testis-specific serine/threonine kinase1 (TSSK1) by the developed assays.</title>
        <authorList>
            <person name="Zhang L."/>
            <person name="Yan Y."/>
            <person name="Liu Z."/>
            <person name="Abliz Z."/>
            <person name="Liu G."/>
        </authorList>
    </citation>
    <scope>FUNCTION</scope>
    <scope>CATALYTIC ACTIVITY</scope>
    <scope>ACTIVITY REGULATION</scope>
</reference>
<reference key="9">
    <citation type="journal article" date="2011" name="Mol. Hum. Reprod.">
        <title>Expression and localization of five members of the testis-specific serine kinase (Tssk) family in mouse and human sperm and testis.</title>
        <authorList>
            <person name="Li Y."/>
            <person name="Sosnik J."/>
            <person name="Brassard L."/>
            <person name="Reese M."/>
            <person name="Spiridonov N.A."/>
            <person name="Bates T.C."/>
            <person name="Johnson G.R."/>
            <person name="Anguita J."/>
            <person name="Visconti P.E."/>
            <person name="Salicioni A.M."/>
        </authorList>
    </citation>
    <scope>TISSUE SPECIFICITY</scope>
</reference>
<reference key="10">
    <citation type="journal article" date="2007" name="Nature">
        <title>Patterns of somatic mutation in human cancer genomes.</title>
        <authorList>
            <person name="Greenman C."/>
            <person name="Stephens P."/>
            <person name="Smith R."/>
            <person name="Dalgliesh G.L."/>
            <person name="Hunter C."/>
            <person name="Bignell G."/>
            <person name="Davies H."/>
            <person name="Teague J."/>
            <person name="Butler A."/>
            <person name="Stevens C."/>
            <person name="Edkins S."/>
            <person name="O'Meara S."/>
            <person name="Vastrik I."/>
            <person name="Schmidt E.E."/>
            <person name="Avis T."/>
            <person name="Barthorpe S."/>
            <person name="Bhamra G."/>
            <person name="Buck G."/>
            <person name="Choudhury B."/>
            <person name="Clements J."/>
            <person name="Cole J."/>
            <person name="Dicks E."/>
            <person name="Forbes S."/>
            <person name="Gray K."/>
            <person name="Halliday K."/>
            <person name="Harrison R."/>
            <person name="Hills K."/>
            <person name="Hinton J."/>
            <person name="Jenkinson A."/>
            <person name="Jones D."/>
            <person name="Menzies A."/>
            <person name="Mironenko T."/>
            <person name="Perry J."/>
            <person name="Raine K."/>
            <person name="Richardson D."/>
            <person name="Shepherd R."/>
            <person name="Small A."/>
            <person name="Tofts C."/>
            <person name="Varian J."/>
            <person name="Webb T."/>
            <person name="West S."/>
            <person name="Widaa S."/>
            <person name="Yates A."/>
            <person name="Cahill D.P."/>
            <person name="Louis D.N."/>
            <person name="Goldstraw P."/>
            <person name="Nicholson A.G."/>
            <person name="Brasseur F."/>
            <person name="Looijenga L."/>
            <person name="Weber B.L."/>
            <person name="Chiew Y.-E."/>
            <person name="DeFazio A."/>
            <person name="Greaves M.F."/>
            <person name="Green A.R."/>
            <person name="Campbell P."/>
            <person name="Birney E."/>
            <person name="Easton D.F."/>
            <person name="Chenevix-Trench G."/>
            <person name="Tan M.-H."/>
            <person name="Khoo S.K."/>
            <person name="Teh B.T."/>
            <person name="Yuen S.T."/>
            <person name="Leung S.Y."/>
            <person name="Wooster R."/>
            <person name="Futreal P.A."/>
            <person name="Stratton M.R."/>
        </authorList>
    </citation>
    <scope>VARIANTS [LARGE SCALE ANALYSIS] THR-50; TYR-83; LEU-233; CYS-237; TRP-288 AND GLU-293</scope>
</reference>
<protein>
    <recommendedName>
        <fullName>Testis-specific serine/threonine-protein kinase 1</fullName>
        <shortName>TSK-1</shortName>
        <shortName>TSK1</shortName>
        <shortName>TSSK-1</shortName>
        <shortName>Testis-specific kinase 1</shortName>
        <ecNumber evidence="9">2.7.11.1</ecNumber>
    </recommendedName>
    <alternativeName>
        <fullName>Serine/threonine-protein kinase 22A</fullName>
    </alternativeName>
</protein>
<organism>
    <name type="scientific">Homo sapiens</name>
    <name type="common">Human</name>
    <dbReference type="NCBI Taxonomy" id="9606"/>
    <lineage>
        <taxon>Eukaryota</taxon>
        <taxon>Metazoa</taxon>
        <taxon>Chordata</taxon>
        <taxon>Craniata</taxon>
        <taxon>Vertebrata</taxon>
        <taxon>Euteleostomi</taxon>
        <taxon>Mammalia</taxon>
        <taxon>Eutheria</taxon>
        <taxon>Euarchontoglires</taxon>
        <taxon>Primates</taxon>
        <taxon>Haplorrhini</taxon>
        <taxon>Catarrhini</taxon>
        <taxon>Hominidae</taxon>
        <taxon>Homo</taxon>
    </lineage>
</organism>
<proteinExistence type="evidence at protein level"/>
<accession>Q9BXA7</accession>
<accession>B2R8D9</accession>
<name>TSSK1_HUMAN</name>